<keyword id="KW-0028">Amino-acid biosynthesis</keyword>
<keyword id="KW-0032">Aminotransferase</keyword>
<keyword id="KW-0368">Histidine biosynthesis</keyword>
<keyword id="KW-0663">Pyridoxal phosphate</keyword>
<keyword id="KW-1185">Reference proteome</keyword>
<keyword id="KW-0808">Transferase</keyword>
<reference key="1">
    <citation type="journal article" date="2005" name="Genome Res.">
        <title>Genome sequence of Blochmannia pennsylvanicus indicates parallel evolutionary trends among bacterial mutualists of insects.</title>
        <authorList>
            <person name="Degnan P.H."/>
            <person name="Lazarus A.B."/>
            <person name="Wernegreen J.J."/>
        </authorList>
    </citation>
    <scope>NUCLEOTIDE SEQUENCE [LARGE SCALE GENOMIC DNA]</scope>
    <source>
        <strain>BPEN</strain>
    </source>
</reference>
<proteinExistence type="inferred from homology"/>
<feature type="chain" id="PRO_0000153318" description="Histidinol-phosphate aminotransferase">
    <location>
        <begin position="1"/>
        <end position="358"/>
    </location>
</feature>
<feature type="modified residue" description="N6-(pyridoxal phosphate)lysine" evidence="1">
    <location>
        <position position="211"/>
    </location>
</feature>
<sequence length="358" mass="40707">MNIRYLARNNILTLKPYQSARKCTHSGNIWLNANEFPIAPDYQFRYKKIHRYPTCQPQEVINNYAYYAGVRSDQILVSRGADESIELLMKVFCNPGKDVIIFCPPTYGMYKTTAEILGINYRIIPKKENWQLDLASIKSQLNNVKLIYICNPNNPTGNIIHLNSLKKLLKIIQNRALLVTDEAYIDFCPDASLVRWLPMYPHLVILRTLSKAFALAGLRCGFTLANPEIIKLLEKVIAPYPLSTPVIDIAEQALTPISIQYTQNRIATVNTNRNILITGLKKCSCVQQVFNSHANYVLVKFNPKYQVFKTLLHQGIVLRDQSNQPGLVNCLRITVGTYNECKHVVSVLKKLHVASLSI</sequence>
<organism>
    <name type="scientific">Blochmanniella pennsylvanica (strain BPEN)</name>
    <dbReference type="NCBI Taxonomy" id="291272"/>
    <lineage>
        <taxon>Bacteria</taxon>
        <taxon>Pseudomonadati</taxon>
        <taxon>Pseudomonadota</taxon>
        <taxon>Gammaproteobacteria</taxon>
        <taxon>Enterobacterales</taxon>
        <taxon>Enterobacteriaceae</taxon>
        <taxon>ant endosymbionts</taxon>
        <taxon>Candidatus Blochmanniella</taxon>
    </lineage>
</organism>
<comment type="catalytic activity">
    <reaction evidence="1">
        <text>L-histidinol phosphate + 2-oxoglutarate = 3-(imidazol-4-yl)-2-oxopropyl phosphate + L-glutamate</text>
        <dbReference type="Rhea" id="RHEA:23744"/>
        <dbReference type="ChEBI" id="CHEBI:16810"/>
        <dbReference type="ChEBI" id="CHEBI:29985"/>
        <dbReference type="ChEBI" id="CHEBI:57766"/>
        <dbReference type="ChEBI" id="CHEBI:57980"/>
        <dbReference type="EC" id="2.6.1.9"/>
    </reaction>
</comment>
<comment type="cofactor">
    <cofactor evidence="1">
        <name>pyridoxal 5'-phosphate</name>
        <dbReference type="ChEBI" id="CHEBI:597326"/>
    </cofactor>
</comment>
<comment type="pathway">
    <text evidence="1">Amino-acid biosynthesis; L-histidine biosynthesis; L-histidine from 5-phospho-alpha-D-ribose 1-diphosphate: step 7/9.</text>
</comment>
<comment type="subunit">
    <text evidence="1">Homodimer.</text>
</comment>
<comment type="similarity">
    <text evidence="1">Belongs to the class-II pyridoxal-phosphate-dependent aminotransferase family. Histidinol-phosphate aminotransferase subfamily.</text>
</comment>
<name>HIS8_BLOPB</name>
<accession>Q492K2</accession>
<evidence type="ECO:0000255" key="1">
    <source>
        <dbReference type="HAMAP-Rule" id="MF_01023"/>
    </source>
</evidence>
<protein>
    <recommendedName>
        <fullName evidence="1">Histidinol-phosphate aminotransferase</fullName>
        <ecNumber evidence="1">2.6.1.9</ecNumber>
    </recommendedName>
    <alternativeName>
        <fullName evidence="1">Imidazole acetol-phosphate transaminase</fullName>
    </alternativeName>
</protein>
<dbReference type="EC" id="2.6.1.9" evidence="1"/>
<dbReference type="EMBL" id="CP000016">
    <property type="protein sequence ID" value="AAZ41095.1"/>
    <property type="molecule type" value="Genomic_DNA"/>
</dbReference>
<dbReference type="RefSeq" id="WP_011283005.1">
    <property type="nucleotide sequence ID" value="NC_007292.1"/>
</dbReference>
<dbReference type="SMR" id="Q492K2"/>
<dbReference type="STRING" id="291272.BPEN_479"/>
<dbReference type="KEGG" id="bpn:BPEN_479"/>
<dbReference type="eggNOG" id="COG0079">
    <property type="taxonomic scope" value="Bacteria"/>
</dbReference>
<dbReference type="HOGENOM" id="CLU_017584_3_1_6"/>
<dbReference type="OrthoDB" id="9813612at2"/>
<dbReference type="UniPathway" id="UPA00031">
    <property type="reaction ID" value="UER00012"/>
</dbReference>
<dbReference type="Proteomes" id="UP000007794">
    <property type="component" value="Chromosome"/>
</dbReference>
<dbReference type="GO" id="GO:0004400">
    <property type="term" value="F:histidinol-phosphate transaminase activity"/>
    <property type="evidence" value="ECO:0007669"/>
    <property type="project" value="UniProtKB-UniRule"/>
</dbReference>
<dbReference type="GO" id="GO:0030170">
    <property type="term" value="F:pyridoxal phosphate binding"/>
    <property type="evidence" value="ECO:0007669"/>
    <property type="project" value="InterPro"/>
</dbReference>
<dbReference type="GO" id="GO:0000105">
    <property type="term" value="P:L-histidine biosynthetic process"/>
    <property type="evidence" value="ECO:0007669"/>
    <property type="project" value="UniProtKB-UniRule"/>
</dbReference>
<dbReference type="CDD" id="cd00609">
    <property type="entry name" value="AAT_like"/>
    <property type="match status" value="1"/>
</dbReference>
<dbReference type="Gene3D" id="3.90.1150.10">
    <property type="entry name" value="Aspartate Aminotransferase, domain 1"/>
    <property type="match status" value="1"/>
</dbReference>
<dbReference type="Gene3D" id="3.40.640.10">
    <property type="entry name" value="Type I PLP-dependent aspartate aminotransferase-like (Major domain)"/>
    <property type="match status" value="1"/>
</dbReference>
<dbReference type="HAMAP" id="MF_01023">
    <property type="entry name" value="HisC_aminotrans_2"/>
    <property type="match status" value="1"/>
</dbReference>
<dbReference type="InterPro" id="IPR001917">
    <property type="entry name" value="Aminotrans_II_pyridoxalP_BS"/>
</dbReference>
<dbReference type="InterPro" id="IPR004839">
    <property type="entry name" value="Aminotransferase_I/II_large"/>
</dbReference>
<dbReference type="InterPro" id="IPR005861">
    <property type="entry name" value="HisP_aminotrans"/>
</dbReference>
<dbReference type="InterPro" id="IPR015424">
    <property type="entry name" value="PyrdxlP-dep_Trfase"/>
</dbReference>
<dbReference type="InterPro" id="IPR015421">
    <property type="entry name" value="PyrdxlP-dep_Trfase_major"/>
</dbReference>
<dbReference type="InterPro" id="IPR015422">
    <property type="entry name" value="PyrdxlP-dep_Trfase_small"/>
</dbReference>
<dbReference type="NCBIfam" id="TIGR01141">
    <property type="entry name" value="hisC"/>
    <property type="match status" value="1"/>
</dbReference>
<dbReference type="PANTHER" id="PTHR42885:SF2">
    <property type="entry name" value="HISTIDINOL-PHOSPHATE AMINOTRANSFERASE"/>
    <property type="match status" value="1"/>
</dbReference>
<dbReference type="PANTHER" id="PTHR42885">
    <property type="entry name" value="HISTIDINOL-PHOSPHATE AMINOTRANSFERASE-RELATED"/>
    <property type="match status" value="1"/>
</dbReference>
<dbReference type="Pfam" id="PF00155">
    <property type="entry name" value="Aminotran_1_2"/>
    <property type="match status" value="1"/>
</dbReference>
<dbReference type="SUPFAM" id="SSF53383">
    <property type="entry name" value="PLP-dependent transferases"/>
    <property type="match status" value="1"/>
</dbReference>
<dbReference type="PROSITE" id="PS00599">
    <property type="entry name" value="AA_TRANSFER_CLASS_2"/>
    <property type="match status" value="1"/>
</dbReference>
<gene>
    <name evidence="1" type="primary">hisC</name>
    <name type="ordered locus">BPEN_479</name>
</gene>